<reference key="1">
    <citation type="journal article" date="1996" name="FEBS Lett.">
        <title>Identification of an Arabidopsis thaliana cDNA encoding a HSP70-related protein belonging to the HSP110/SSE1 subfamily.</title>
        <authorList>
            <person name="Storozhenko S."/>
            <person name="De Pauw P."/>
            <person name="Kushnir S."/>
            <person name="Van Montagu M."/>
            <person name="Inze D."/>
        </authorList>
    </citation>
    <scope>NUCLEOTIDE SEQUENCE [MRNA] (ISOFORM 1)</scope>
    <scope>TISSUE SPECIFICITY</scope>
    <scope>INDUCTION BY HEAT</scope>
</reference>
<reference key="2">
    <citation type="journal article" date="2000" name="Nature">
        <title>Sequence and analysis of chromosome 1 of the plant Arabidopsis thaliana.</title>
        <authorList>
            <person name="Theologis A."/>
            <person name="Ecker J.R."/>
            <person name="Palm C.J."/>
            <person name="Federspiel N.A."/>
            <person name="Kaul S."/>
            <person name="White O."/>
            <person name="Alonso J."/>
            <person name="Altafi H."/>
            <person name="Araujo R."/>
            <person name="Bowman C.L."/>
            <person name="Brooks S.Y."/>
            <person name="Buehler E."/>
            <person name="Chan A."/>
            <person name="Chao Q."/>
            <person name="Chen H."/>
            <person name="Cheuk R.F."/>
            <person name="Chin C.W."/>
            <person name="Chung M.K."/>
            <person name="Conn L."/>
            <person name="Conway A.B."/>
            <person name="Conway A.R."/>
            <person name="Creasy T.H."/>
            <person name="Dewar K."/>
            <person name="Dunn P."/>
            <person name="Etgu P."/>
            <person name="Feldblyum T.V."/>
            <person name="Feng J.-D."/>
            <person name="Fong B."/>
            <person name="Fujii C.Y."/>
            <person name="Gill J.E."/>
            <person name="Goldsmith A.D."/>
            <person name="Haas B."/>
            <person name="Hansen N.F."/>
            <person name="Hughes B."/>
            <person name="Huizar L."/>
            <person name="Hunter J.L."/>
            <person name="Jenkins J."/>
            <person name="Johnson-Hopson C."/>
            <person name="Khan S."/>
            <person name="Khaykin E."/>
            <person name="Kim C.J."/>
            <person name="Koo H.L."/>
            <person name="Kremenetskaia I."/>
            <person name="Kurtz D.B."/>
            <person name="Kwan A."/>
            <person name="Lam B."/>
            <person name="Langin-Hooper S."/>
            <person name="Lee A."/>
            <person name="Lee J.M."/>
            <person name="Lenz C.A."/>
            <person name="Li J.H."/>
            <person name="Li Y.-P."/>
            <person name="Lin X."/>
            <person name="Liu S.X."/>
            <person name="Liu Z.A."/>
            <person name="Luros J.S."/>
            <person name="Maiti R."/>
            <person name="Marziali A."/>
            <person name="Militscher J."/>
            <person name="Miranda M."/>
            <person name="Nguyen M."/>
            <person name="Nierman W.C."/>
            <person name="Osborne B.I."/>
            <person name="Pai G."/>
            <person name="Peterson J."/>
            <person name="Pham P.K."/>
            <person name="Rizzo M."/>
            <person name="Rooney T."/>
            <person name="Rowley D."/>
            <person name="Sakano H."/>
            <person name="Salzberg S.L."/>
            <person name="Schwartz J.R."/>
            <person name="Shinn P."/>
            <person name="Southwick A.M."/>
            <person name="Sun H."/>
            <person name="Tallon L.J."/>
            <person name="Tambunga G."/>
            <person name="Toriumi M.J."/>
            <person name="Town C.D."/>
            <person name="Utterback T."/>
            <person name="Van Aken S."/>
            <person name="Vaysberg M."/>
            <person name="Vysotskaia V.S."/>
            <person name="Walker M."/>
            <person name="Wu D."/>
            <person name="Yu G."/>
            <person name="Fraser C.M."/>
            <person name="Venter J.C."/>
            <person name="Davis R.W."/>
        </authorList>
    </citation>
    <scope>NUCLEOTIDE SEQUENCE [LARGE SCALE GENOMIC DNA]</scope>
    <source>
        <strain>cv. Columbia</strain>
    </source>
</reference>
<reference key="3">
    <citation type="journal article" date="2017" name="Plant J.">
        <title>Araport11: a complete reannotation of the Arabidopsis thaliana reference genome.</title>
        <authorList>
            <person name="Cheng C.Y."/>
            <person name="Krishnakumar V."/>
            <person name="Chan A.P."/>
            <person name="Thibaud-Nissen F."/>
            <person name="Schobel S."/>
            <person name="Town C.D."/>
        </authorList>
    </citation>
    <scope>GENOME REANNOTATION</scope>
    <source>
        <strain>cv. Columbia</strain>
    </source>
</reference>
<reference key="4">
    <citation type="journal article" date="2003" name="Science">
        <title>Empirical analysis of transcriptional activity in the Arabidopsis genome.</title>
        <authorList>
            <person name="Yamada K."/>
            <person name="Lim J."/>
            <person name="Dale J.M."/>
            <person name="Chen H."/>
            <person name="Shinn P."/>
            <person name="Palm C.J."/>
            <person name="Southwick A.M."/>
            <person name="Wu H.C."/>
            <person name="Kim C.J."/>
            <person name="Nguyen M."/>
            <person name="Pham P.K."/>
            <person name="Cheuk R.F."/>
            <person name="Karlin-Newmann G."/>
            <person name="Liu S.X."/>
            <person name="Lam B."/>
            <person name="Sakano H."/>
            <person name="Wu T."/>
            <person name="Yu G."/>
            <person name="Miranda M."/>
            <person name="Quach H.L."/>
            <person name="Tripp M."/>
            <person name="Chang C.H."/>
            <person name="Lee J.M."/>
            <person name="Toriumi M.J."/>
            <person name="Chan M.M."/>
            <person name="Tang C.C."/>
            <person name="Onodera C.S."/>
            <person name="Deng J.M."/>
            <person name="Akiyama K."/>
            <person name="Ansari Y."/>
            <person name="Arakawa T."/>
            <person name="Banh J."/>
            <person name="Banno F."/>
            <person name="Bowser L."/>
            <person name="Brooks S.Y."/>
            <person name="Carninci P."/>
            <person name="Chao Q."/>
            <person name="Choy N."/>
            <person name="Enju A."/>
            <person name="Goldsmith A.D."/>
            <person name="Gurjal M."/>
            <person name="Hansen N.F."/>
            <person name="Hayashizaki Y."/>
            <person name="Johnson-Hopson C."/>
            <person name="Hsuan V.W."/>
            <person name="Iida K."/>
            <person name="Karnes M."/>
            <person name="Khan S."/>
            <person name="Koesema E."/>
            <person name="Ishida J."/>
            <person name="Jiang P.X."/>
            <person name="Jones T."/>
            <person name="Kawai J."/>
            <person name="Kamiya A."/>
            <person name="Meyers C."/>
            <person name="Nakajima M."/>
            <person name="Narusaka M."/>
            <person name="Seki M."/>
            <person name="Sakurai T."/>
            <person name="Satou M."/>
            <person name="Tamse R."/>
            <person name="Vaysberg M."/>
            <person name="Wallender E.K."/>
            <person name="Wong C."/>
            <person name="Yamamura Y."/>
            <person name="Yuan S."/>
            <person name="Shinozaki K."/>
            <person name="Davis R.W."/>
            <person name="Theologis A."/>
            <person name="Ecker J.R."/>
        </authorList>
    </citation>
    <scope>NUCLEOTIDE SEQUENCE [LARGE SCALE MRNA] (ISOFORM 1)</scope>
    <source>
        <strain>cv. Columbia</strain>
    </source>
</reference>
<reference key="5">
    <citation type="submission" date="2006-07" db="EMBL/GenBank/DDBJ databases">
        <title>Large-scale analysis of RIKEN Arabidopsis full-length (RAFL) cDNAs.</title>
        <authorList>
            <person name="Totoki Y."/>
            <person name="Seki M."/>
            <person name="Ishida J."/>
            <person name="Nakajima M."/>
            <person name="Enju A."/>
            <person name="Kamiya A."/>
            <person name="Narusaka M."/>
            <person name="Shin-i T."/>
            <person name="Nakagawa M."/>
            <person name="Sakamoto N."/>
            <person name="Oishi K."/>
            <person name="Kohara Y."/>
            <person name="Kobayashi M."/>
            <person name="Toyoda A."/>
            <person name="Sakaki Y."/>
            <person name="Sakurai T."/>
            <person name="Iida K."/>
            <person name="Akiyama K."/>
            <person name="Satou M."/>
            <person name="Toyoda T."/>
            <person name="Konagaya A."/>
            <person name="Carninci P."/>
            <person name="Kawai J."/>
            <person name="Hayashizaki Y."/>
            <person name="Shinozaki K."/>
        </authorList>
    </citation>
    <scope>NUCLEOTIDE SEQUENCE [LARGE SCALE MRNA] (ISOFORM 2)</scope>
    <source>
        <strain>cv. Columbia</strain>
    </source>
</reference>
<reference key="6">
    <citation type="journal article" date="2001" name="Cell Stress Chaperones">
        <title>Genomic analysis of the Hsp70 superfamily in Arabidopsis thaliana.</title>
        <authorList>
            <person name="Lin B.L."/>
            <person name="Wang J.S."/>
            <person name="Liu H.C."/>
            <person name="Chen R.W."/>
            <person name="Meyer Y."/>
            <person name="Barakat A."/>
            <person name="Delseny M."/>
        </authorList>
    </citation>
    <scope>GENE FAMILY</scope>
    <scope>NOMENCLATURE</scope>
</reference>
<reference key="7">
    <citation type="journal article" date="2011" name="Plant J.">
        <title>AtHsp70-15-deficient Arabidopsis plants are characterized by reduced growth, a constitutive cytosolic protein response and enhanced resistance to TuMV.</title>
        <authorList>
            <person name="Jungkunz I."/>
            <person name="Link K."/>
            <person name="Vogel F."/>
            <person name="Voll L.M."/>
            <person name="Sonnewald S."/>
            <person name="Sonnewald U."/>
        </authorList>
    </citation>
    <scope>SUBCELLULAR LOCATION</scope>
    <scope>DISRUPTION PHENOTYPE</scope>
</reference>
<reference key="8">
    <citation type="journal article" date="2014" name="Plant Cell">
        <title>HEAT-INDUCED TAS1 TARGET1 Mediates Thermotolerance via HEAT STRESS TRANSCRIPTION FACTOR A1a-Directed Pathways in Arabidopsis.</title>
        <authorList>
            <person name="Li S."/>
            <person name="Liu J."/>
            <person name="Liu Z."/>
            <person name="Li X."/>
            <person name="Wu F."/>
            <person name="He Y."/>
        </authorList>
    </citation>
    <scope>INTERACTION WITH HTT1</scope>
    <scope>SUBCELLULAR LOCATION</scope>
    <source>
        <strain>cv. Columbia</strain>
        <strain>cv. Wassilewskija</strain>
    </source>
</reference>
<keyword id="KW-0025">Alternative splicing</keyword>
<keyword id="KW-0067">ATP-binding</keyword>
<keyword id="KW-0143">Chaperone</keyword>
<keyword id="KW-0963">Cytoplasm</keyword>
<keyword id="KW-0547">Nucleotide-binding</keyword>
<keyword id="KW-0539">Nucleus</keyword>
<keyword id="KW-0597">Phosphoprotein</keyword>
<keyword id="KW-1185">Reference proteome</keyword>
<keyword id="KW-0346">Stress response</keyword>
<evidence type="ECO:0000250" key="1">
    <source>
        <dbReference type="UniProtKB" id="F4HQD4"/>
    </source>
</evidence>
<evidence type="ECO:0000256" key="2">
    <source>
        <dbReference type="SAM" id="MobiDB-lite"/>
    </source>
</evidence>
<evidence type="ECO:0000269" key="3">
    <source>
    </source>
</evidence>
<evidence type="ECO:0000269" key="4">
    <source>
    </source>
</evidence>
<evidence type="ECO:0000269" key="5">
    <source>
    </source>
</evidence>
<evidence type="ECO:0000303" key="6">
    <source ref="5"/>
</evidence>
<evidence type="ECO:0000305" key="7"/>
<organism>
    <name type="scientific">Arabidopsis thaliana</name>
    <name type="common">Mouse-ear cress</name>
    <dbReference type="NCBI Taxonomy" id="3702"/>
    <lineage>
        <taxon>Eukaryota</taxon>
        <taxon>Viridiplantae</taxon>
        <taxon>Streptophyta</taxon>
        <taxon>Embryophyta</taxon>
        <taxon>Tracheophyta</taxon>
        <taxon>Spermatophyta</taxon>
        <taxon>Magnoliopsida</taxon>
        <taxon>eudicotyledons</taxon>
        <taxon>Gunneridae</taxon>
        <taxon>Pentapetalae</taxon>
        <taxon>rosids</taxon>
        <taxon>malvids</taxon>
        <taxon>Brassicales</taxon>
        <taxon>Brassicaceae</taxon>
        <taxon>Camelineae</taxon>
        <taxon>Arabidopsis</taxon>
    </lineage>
</organism>
<comment type="function">
    <text evidence="7">In cooperation with other chaperones, Hsp70s are key components that facilitate folding of de novo synthesized proteins, assist translocation of precursor proteins into organelles, and are responsible for degradation of damaged protein under stress conditions.</text>
</comment>
<comment type="subunit">
    <text evidence="4">Interacts with HTT1 in both cytoplasm and nucleus.</text>
</comment>
<comment type="subcellular location">
    <subcellularLocation>
        <location evidence="3 4">Cytoplasm</location>
    </subcellularLocation>
    <subcellularLocation>
        <location evidence="3 4">Nucleus</location>
    </subcellularLocation>
    <text evidence="3">Predominantly detected in the cytoplasm.</text>
</comment>
<comment type="alternative products">
    <event type="alternative splicing"/>
    <isoform>
        <id>Q9S7C0-1</id>
        <name>1</name>
        <sequence type="displayed"/>
    </isoform>
    <isoform>
        <id>Q9S7C0-2</id>
        <name>2</name>
        <sequence type="described" ref="VSP_042245 VSP_042246"/>
    </isoform>
</comment>
<comment type="tissue specificity">
    <text evidence="5">Constitutively expressed.</text>
</comment>
<comment type="induction">
    <text evidence="5">By heat.</text>
</comment>
<comment type="disruption phenotype">
    <text evidence="3">No visible phenotype.</text>
</comment>
<comment type="similarity">
    <text evidence="7">Belongs to the heat shock protein 70 (TC 1.A.33) family. HSP110/SSE subfamily.</text>
</comment>
<accession>Q9S7C0</accession>
<accession>Q0WVB9</accession>
<accession>Q96269</accession>
<gene>
    <name type="primary">HSP70-14</name>
    <name type="synonym">HSP91</name>
    <name type="ordered locus">At1g79930</name>
    <name type="ORF">F18B13.1</name>
    <name type="ORF">F19K16.11</name>
</gene>
<protein>
    <recommendedName>
        <fullName>Heat shock 70 kDa protein 14</fullName>
    </recommendedName>
    <alternativeName>
        <fullName>Heat shock protein 70-14</fullName>
        <shortName>AtHsp70-14</shortName>
    </alternativeName>
    <alternativeName>
        <fullName>Heat shock protein 91</fullName>
    </alternativeName>
</protein>
<name>HSP7O_ARATH</name>
<feature type="chain" id="PRO_0000415432" description="Heat shock 70 kDa protein 14">
    <location>
        <begin position="1"/>
        <end position="831"/>
    </location>
</feature>
<feature type="region of interest" description="Disordered" evidence="2">
    <location>
        <begin position="503"/>
        <end position="579"/>
    </location>
</feature>
<feature type="region of interest" description="Disordered" evidence="2">
    <location>
        <begin position="786"/>
        <end position="831"/>
    </location>
</feature>
<feature type="compositionally biased region" description="Basic and acidic residues" evidence="2">
    <location>
        <begin position="509"/>
        <end position="526"/>
    </location>
</feature>
<feature type="modified residue" description="Phosphoserine" evidence="1">
    <location>
        <position position="533"/>
    </location>
</feature>
<feature type="splice variant" id="VSP_042245" description="In isoform 2." evidence="6">
    <original>KFCRPIMTKPK</original>
    <variation>NYGCFTGFAGL</variation>
    <location>
        <begin position="779"/>
        <end position="789"/>
    </location>
</feature>
<feature type="splice variant" id="VSP_042246" description="In isoform 2." evidence="6">
    <location>
        <begin position="790"/>
        <end position="831"/>
    </location>
</feature>
<feature type="sequence conflict" description="In Ref. 1; CAA94389." evidence="7" ref="1">
    <original>V</original>
    <variation>I</variation>
    <location>
        <position position="4"/>
    </location>
</feature>
<feature type="sequence conflict" description="In Ref. 1; CAA94389." evidence="7" ref="1">
    <original>KQ</original>
    <variation>NE</variation>
    <location>
        <begin position="44"/>
        <end position="45"/>
    </location>
</feature>
<feature type="sequence conflict" description="In Ref. 1; CAA94389." evidence="7" ref="1">
    <original>L</original>
    <variation>F</variation>
    <location>
        <position position="87"/>
    </location>
</feature>
<feature type="sequence conflict" description="In Ref. 1; CAA94389." evidence="7" ref="1">
    <original>V</original>
    <variation>A</variation>
    <location>
        <position position="448"/>
    </location>
</feature>
<feature type="sequence conflict" description="In Ref. 1; CAA94389." evidence="7" ref="1">
    <original>G</original>
    <variation>S</variation>
    <location>
        <position position="551"/>
    </location>
</feature>
<feature type="sequence conflict" description="In Ref. 1; CAA94389." evidence="7" ref="1">
    <original>R</original>
    <variation>T</variation>
    <location>
        <position position="650"/>
    </location>
</feature>
<feature type="sequence conflict" description="In Ref. 1; CAA94389." evidence="7" ref="1">
    <original>V</original>
    <variation>A</variation>
    <location>
        <position position="791"/>
    </location>
</feature>
<feature type="sequence conflict" description="In Ref. 1; CAA94389." evidence="7" ref="1">
    <original>A</original>
    <variation>G</variation>
    <location>
        <position position="818"/>
    </location>
</feature>
<feature type="sequence conflict" description="In Ref. 1; CAA94389." evidence="7" ref="1">
    <original>E</original>
    <variation>G</variation>
    <location>
        <position position="828"/>
    </location>
</feature>
<sequence length="831" mass="91750">MSVVGFDFGNENCLVAVARQRGIDVVLNDESNRETPAIVCFGDKQRFIGTAGAASTMMNPKNSISQIKRLIGRQFSDPELQRDIKSLPFSVTEGPDGYPLIHANYLGEKRAFTPTQVMGMMLSNLKGIAEKNLNTAVVDCCIGIPVYFTDLQRRAVLDAATIAGLHPLRLIHETTATALAYGIYKTDLPESDQLNVAFIDIGHASMQVCIAGFKKGQLKILSHAFDRSLGGRDFDEVLFNHFAAKFKDEYKIDVSQNAKASLRLRATCEKLKKVLSANPLAPLNIECLMDEKDVRGVIKREEFEEISIPILERVKRPLEKALSDAGLTVEDVHMVEVIGSGSRVPAMIKILTEFFGKEPRRTMNASECVSRGCALQCAILSPTFKVREFQVHESFPFSISLAWKGAASEAQNGGAENQQSTIVFPKGNPIPSVKALTFYRSGTFSVDVQYSDVNDLQAPPKISTYTIGPFQSSKGERAKLKVKVRLNLHGIVSVESATLLEEEEVEVPVTKEHSEETTKMDSDKASAEAAPASGDCDVNMQDAKDTSDATGTDNGVPESAEKPVQMETDSKAEAPKKKVKKTNVPLSELVYGALKTVEVEKAVEKEFEMALQDRVMEETKDRKNAVESYVYDMRNKLSDKYQEYITDSEREAFLANLQEVEDWLYEDGEDETKGVYVAKLEELKKVGDPVEVRYKESLERGSVIDQLGYCINSYREAAMSTDPKFDHIELAEKQKVLNECVEAEAWLRGKQQQQDTLPKYATPALLSADVKSKAEALDKFCRPIMTKPKPVAKAEAPQAKGGEQADEGKSEPEQPASAEPMETENPAEGST</sequence>
<dbReference type="EMBL" id="Z70314">
    <property type="protein sequence ID" value="CAA94389.1"/>
    <property type="molecule type" value="mRNA"/>
</dbReference>
<dbReference type="EMBL" id="AC009322">
    <property type="protein sequence ID" value="AAD55461.1"/>
    <property type="molecule type" value="Genomic_DNA"/>
</dbReference>
<dbReference type="EMBL" id="AC011717">
    <property type="protein sequence ID" value="AAG52240.1"/>
    <property type="molecule type" value="Genomic_DNA"/>
</dbReference>
<dbReference type="EMBL" id="CP002684">
    <property type="protein sequence ID" value="AEE36327.1"/>
    <property type="molecule type" value="Genomic_DNA"/>
</dbReference>
<dbReference type="EMBL" id="CP002684">
    <property type="protein sequence ID" value="AEE36328.1"/>
    <property type="molecule type" value="Genomic_DNA"/>
</dbReference>
<dbReference type="EMBL" id="AY079015">
    <property type="protein sequence ID" value="AAL84971.1"/>
    <property type="molecule type" value="mRNA"/>
</dbReference>
<dbReference type="EMBL" id="BT002625">
    <property type="protein sequence ID" value="AAO11541.1"/>
    <property type="molecule type" value="mRNA"/>
</dbReference>
<dbReference type="EMBL" id="AK226836">
    <property type="protein sequence ID" value="BAE98929.1"/>
    <property type="molecule type" value="mRNA"/>
</dbReference>
<dbReference type="PIR" id="E96830">
    <property type="entry name" value="E96830"/>
</dbReference>
<dbReference type="PIR" id="S74252">
    <property type="entry name" value="S74252"/>
</dbReference>
<dbReference type="RefSeq" id="NP_001031305.1">
    <molecule id="Q9S7C0-2"/>
    <property type="nucleotide sequence ID" value="NM_001036228.2"/>
</dbReference>
<dbReference type="RefSeq" id="NP_178111.1">
    <molecule id="Q9S7C0-1"/>
    <property type="nucleotide sequence ID" value="NM_106642.5"/>
</dbReference>
<dbReference type="SMR" id="Q9S7C0"/>
<dbReference type="BioGRID" id="29551">
    <property type="interactions" value="11"/>
</dbReference>
<dbReference type="FunCoup" id="Q9S7C0">
    <property type="interactions" value="4347"/>
</dbReference>
<dbReference type="STRING" id="3702.Q9S7C0"/>
<dbReference type="GlyGen" id="Q9S7C0">
    <property type="glycosylation" value="1 site"/>
</dbReference>
<dbReference type="MetOSite" id="Q9S7C0"/>
<dbReference type="PaxDb" id="3702-AT1G79930.1"/>
<dbReference type="ProteomicsDB" id="232120">
    <molecule id="Q9S7C0-1"/>
</dbReference>
<dbReference type="EnsemblPlants" id="AT1G79930.1">
    <molecule id="Q9S7C0-1"/>
    <property type="protein sequence ID" value="AT1G79930.1"/>
    <property type="gene ID" value="AT1G79930"/>
</dbReference>
<dbReference type="EnsemblPlants" id="AT1G79930.2">
    <molecule id="Q9S7C0-2"/>
    <property type="protein sequence ID" value="AT1G79930.2"/>
    <property type="gene ID" value="AT1G79930"/>
</dbReference>
<dbReference type="GeneID" id="844333"/>
<dbReference type="Gramene" id="AT1G79930.1">
    <molecule id="Q9S7C0-1"/>
    <property type="protein sequence ID" value="AT1G79930.1"/>
    <property type="gene ID" value="AT1G79930"/>
</dbReference>
<dbReference type="Gramene" id="AT1G79930.2">
    <molecule id="Q9S7C0-2"/>
    <property type="protein sequence ID" value="AT1G79930.2"/>
    <property type="gene ID" value="AT1G79930"/>
</dbReference>
<dbReference type="KEGG" id="ath:AT1G79930"/>
<dbReference type="Araport" id="AT1G79930"/>
<dbReference type="TAIR" id="AT1G79930">
    <property type="gene designation" value="HSP91"/>
</dbReference>
<dbReference type="eggNOG" id="KOG0103">
    <property type="taxonomic scope" value="Eukaryota"/>
</dbReference>
<dbReference type="InParanoid" id="Q9S7C0"/>
<dbReference type="OMA" id="APVHIEC"/>
<dbReference type="PhylomeDB" id="Q9S7C0"/>
<dbReference type="CD-CODE" id="4299E36E">
    <property type="entry name" value="Nucleolus"/>
</dbReference>
<dbReference type="PRO" id="PR:Q9S7C0"/>
<dbReference type="Proteomes" id="UP000006548">
    <property type="component" value="Chromosome 1"/>
</dbReference>
<dbReference type="ExpressionAtlas" id="Q9S7C0">
    <property type="expression patterns" value="baseline and differential"/>
</dbReference>
<dbReference type="GO" id="GO:0005737">
    <property type="term" value="C:cytoplasm"/>
    <property type="evidence" value="ECO:0000314"/>
    <property type="project" value="UniProtKB"/>
</dbReference>
<dbReference type="GO" id="GO:0005829">
    <property type="term" value="C:cytosol"/>
    <property type="evidence" value="ECO:0000314"/>
    <property type="project" value="TAIR"/>
</dbReference>
<dbReference type="GO" id="GO:0005739">
    <property type="term" value="C:mitochondrion"/>
    <property type="evidence" value="ECO:0007005"/>
    <property type="project" value="TAIR"/>
</dbReference>
<dbReference type="GO" id="GO:0005634">
    <property type="term" value="C:nucleus"/>
    <property type="evidence" value="ECO:0000314"/>
    <property type="project" value="UniProtKB"/>
</dbReference>
<dbReference type="GO" id="GO:0005524">
    <property type="term" value="F:ATP binding"/>
    <property type="evidence" value="ECO:0000250"/>
    <property type="project" value="TAIR"/>
</dbReference>
<dbReference type="GO" id="GO:0140662">
    <property type="term" value="F:ATP-dependent protein folding chaperone"/>
    <property type="evidence" value="ECO:0007669"/>
    <property type="project" value="InterPro"/>
</dbReference>
<dbReference type="GO" id="GO:0009408">
    <property type="term" value="P:response to heat"/>
    <property type="evidence" value="ECO:0000270"/>
    <property type="project" value="TAIR"/>
</dbReference>
<dbReference type="CDD" id="cd24095">
    <property type="entry name" value="ASKHA_NBD_HSP70_AtHsp70-14-like"/>
    <property type="match status" value="1"/>
</dbReference>
<dbReference type="FunFam" id="2.60.34.10:FF:000031">
    <property type="entry name" value="Heat shock 70 kDa protein 14"/>
    <property type="match status" value="1"/>
</dbReference>
<dbReference type="FunFam" id="1.20.1270.10:FF:000002">
    <property type="entry name" value="Heat shock 70 kDa protein 4"/>
    <property type="match status" value="1"/>
</dbReference>
<dbReference type="FunFam" id="3.30.30.30:FF:000002">
    <property type="entry name" value="Heat shock 70 kDa protein 4"/>
    <property type="match status" value="1"/>
</dbReference>
<dbReference type="FunFam" id="3.30.420.40:FF:000171">
    <property type="entry name" value="Heat shock 70 kDa protein 4"/>
    <property type="match status" value="2"/>
</dbReference>
<dbReference type="FunFam" id="3.90.640.10:FF:000004">
    <property type="entry name" value="Heat shock 70 kDa protein 4"/>
    <property type="match status" value="1"/>
</dbReference>
<dbReference type="Gene3D" id="1.20.1270.10">
    <property type="match status" value="1"/>
</dbReference>
<dbReference type="Gene3D" id="3.30.30.30">
    <property type="match status" value="1"/>
</dbReference>
<dbReference type="Gene3D" id="3.30.420.40">
    <property type="match status" value="2"/>
</dbReference>
<dbReference type="Gene3D" id="3.90.640.10">
    <property type="entry name" value="Actin, Chain A, domain 4"/>
    <property type="match status" value="1"/>
</dbReference>
<dbReference type="Gene3D" id="2.60.34.10">
    <property type="entry name" value="Substrate Binding Domain Of DNAk, Chain A, domain 1"/>
    <property type="match status" value="1"/>
</dbReference>
<dbReference type="InterPro" id="IPR043129">
    <property type="entry name" value="ATPase_NBD"/>
</dbReference>
<dbReference type="InterPro" id="IPR029048">
    <property type="entry name" value="HSP70_C_sf"/>
</dbReference>
<dbReference type="InterPro" id="IPR029047">
    <property type="entry name" value="HSP70_peptide-bd_sf"/>
</dbReference>
<dbReference type="InterPro" id="IPR013126">
    <property type="entry name" value="Hsp_70_fam"/>
</dbReference>
<dbReference type="PANTHER" id="PTHR45639:SF4">
    <property type="entry name" value="HSC70CB, ISOFORM G"/>
    <property type="match status" value="1"/>
</dbReference>
<dbReference type="PANTHER" id="PTHR45639">
    <property type="entry name" value="HSC70CB, ISOFORM G-RELATED"/>
    <property type="match status" value="1"/>
</dbReference>
<dbReference type="Pfam" id="PF00012">
    <property type="entry name" value="HSP70"/>
    <property type="match status" value="1"/>
</dbReference>
<dbReference type="PRINTS" id="PR00301">
    <property type="entry name" value="HEATSHOCK70"/>
</dbReference>
<dbReference type="SUPFAM" id="SSF53067">
    <property type="entry name" value="Actin-like ATPase domain"/>
    <property type="match status" value="2"/>
</dbReference>
<dbReference type="SUPFAM" id="SSF100934">
    <property type="entry name" value="Heat shock protein 70kD (HSP70), C-terminal subdomain"/>
    <property type="match status" value="2"/>
</dbReference>
<dbReference type="SUPFAM" id="SSF100920">
    <property type="entry name" value="Heat shock protein 70kD (HSP70), peptide-binding domain"/>
    <property type="match status" value="1"/>
</dbReference>
<proteinExistence type="evidence at protein level"/>